<proteinExistence type="inferred from homology"/>
<reference key="1">
    <citation type="journal article" date="2011" name="J. Bacteriol.">
        <title>Genome of Ochrobactrum anthropi ATCC 49188 T, a versatile opportunistic pathogen and symbiont of several eukaryotic hosts.</title>
        <authorList>
            <person name="Chain P.S."/>
            <person name="Lang D.M."/>
            <person name="Comerci D.J."/>
            <person name="Malfatti S.A."/>
            <person name="Vergez L.M."/>
            <person name="Shin M."/>
            <person name="Ugalde R.A."/>
            <person name="Garcia E."/>
            <person name="Tolmasky M.E."/>
        </authorList>
    </citation>
    <scope>NUCLEOTIDE SEQUENCE [LARGE SCALE GENOMIC DNA]</scope>
    <source>
        <strain>ATCC 49188 / DSM 6882 / CCUG 24695 / JCM 21032 / LMG 3331 / NBRC 15819 / NCTC 12168 / Alc 37</strain>
    </source>
</reference>
<dbReference type="EMBL" id="CP000758">
    <property type="protein sequence ID" value="ABS14661.1"/>
    <property type="molecule type" value="Genomic_DNA"/>
</dbReference>
<dbReference type="RefSeq" id="WP_010659905.1">
    <property type="nucleotide sequence ID" value="NC_009667.1"/>
</dbReference>
<dbReference type="SMR" id="A6X0A7"/>
<dbReference type="STRING" id="439375.Oant_1945"/>
<dbReference type="GeneID" id="61317596"/>
<dbReference type="KEGG" id="oan:Oant_1945"/>
<dbReference type="eggNOG" id="COG0244">
    <property type="taxonomic scope" value="Bacteria"/>
</dbReference>
<dbReference type="HOGENOM" id="CLU_092227_0_0_5"/>
<dbReference type="PhylomeDB" id="A6X0A7"/>
<dbReference type="Proteomes" id="UP000002301">
    <property type="component" value="Chromosome 1"/>
</dbReference>
<dbReference type="GO" id="GO:0015934">
    <property type="term" value="C:large ribosomal subunit"/>
    <property type="evidence" value="ECO:0007669"/>
    <property type="project" value="InterPro"/>
</dbReference>
<dbReference type="GO" id="GO:0070180">
    <property type="term" value="F:large ribosomal subunit rRNA binding"/>
    <property type="evidence" value="ECO:0007669"/>
    <property type="project" value="UniProtKB-UniRule"/>
</dbReference>
<dbReference type="GO" id="GO:0003735">
    <property type="term" value="F:structural constituent of ribosome"/>
    <property type="evidence" value="ECO:0007669"/>
    <property type="project" value="InterPro"/>
</dbReference>
<dbReference type="GO" id="GO:0006412">
    <property type="term" value="P:translation"/>
    <property type="evidence" value="ECO:0007669"/>
    <property type="project" value="UniProtKB-UniRule"/>
</dbReference>
<dbReference type="CDD" id="cd05797">
    <property type="entry name" value="Ribosomal_L10"/>
    <property type="match status" value="1"/>
</dbReference>
<dbReference type="Gene3D" id="3.30.70.1730">
    <property type="match status" value="1"/>
</dbReference>
<dbReference type="Gene3D" id="6.10.250.290">
    <property type="match status" value="1"/>
</dbReference>
<dbReference type="HAMAP" id="MF_00362">
    <property type="entry name" value="Ribosomal_uL10"/>
    <property type="match status" value="1"/>
</dbReference>
<dbReference type="InterPro" id="IPR001790">
    <property type="entry name" value="Ribosomal_uL10"/>
</dbReference>
<dbReference type="InterPro" id="IPR043141">
    <property type="entry name" value="Ribosomal_uL10-like_sf"/>
</dbReference>
<dbReference type="InterPro" id="IPR022973">
    <property type="entry name" value="Ribosomal_uL10_bac"/>
</dbReference>
<dbReference type="InterPro" id="IPR047865">
    <property type="entry name" value="Ribosomal_uL10_bac_type"/>
</dbReference>
<dbReference type="InterPro" id="IPR002363">
    <property type="entry name" value="Ribosomal_uL10_CS_bac"/>
</dbReference>
<dbReference type="NCBIfam" id="NF000955">
    <property type="entry name" value="PRK00099.1-1"/>
    <property type="match status" value="1"/>
</dbReference>
<dbReference type="PANTHER" id="PTHR11560">
    <property type="entry name" value="39S RIBOSOMAL PROTEIN L10, MITOCHONDRIAL"/>
    <property type="match status" value="1"/>
</dbReference>
<dbReference type="Pfam" id="PF00466">
    <property type="entry name" value="Ribosomal_L10"/>
    <property type="match status" value="1"/>
</dbReference>
<dbReference type="SUPFAM" id="SSF160369">
    <property type="entry name" value="Ribosomal protein L10-like"/>
    <property type="match status" value="1"/>
</dbReference>
<dbReference type="PROSITE" id="PS01109">
    <property type="entry name" value="RIBOSOMAL_L10"/>
    <property type="match status" value="1"/>
</dbReference>
<feature type="chain" id="PRO_1000005547" description="Large ribosomal subunit protein uL10">
    <location>
        <begin position="1"/>
        <end position="172"/>
    </location>
</feature>
<sequence>MDRAEKREFVSWLNGAFKESGSVVVAHYTGLTVAQMSDLRSKMRDAGGSVKVAKNRLAKIALQGTESEGISDLFTGQTVVAYANDPIAAPKVAVEFAKANDKLVILGGAMGATTLNADGVKSLASLPSLDELRAKLVGMIQTPAQRLAVLTSAPAGQIARVIGAHARKNEAA</sequence>
<protein>
    <recommendedName>
        <fullName evidence="1">Large ribosomal subunit protein uL10</fullName>
    </recommendedName>
    <alternativeName>
        <fullName evidence="2">50S ribosomal protein L10</fullName>
    </alternativeName>
</protein>
<gene>
    <name evidence="1" type="primary">rplJ</name>
    <name type="ordered locus">Oant_1945</name>
</gene>
<evidence type="ECO:0000255" key="1">
    <source>
        <dbReference type="HAMAP-Rule" id="MF_00362"/>
    </source>
</evidence>
<evidence type="ECO:0000305" key="2"/>
<keyword id="KW-1185">Reference proteome</keyword>
<keyword id="KW-0687">Ribonucleoprotein</keyword>
<keyword id="KW-0689">Ribosomal protein</keyword>
<keyword id="KW-0694">RNA-binding</keyword>
<keyword id="KW-0699">rRNA-binding</keyword>
<name>RL10_BRUA4</name>
<comment type="function">
    <text evidence="1">Forms part of the ribosomal stalk, playing a central role in the interaction of the ribosome with GTP-bound translation factors.</text>
</comment>
<comment type="subunit">
    <text evidence="1">Part of the ribosomal stalk of the 50S ribosomal subunit. The N-terminus interacts with L11 and the large rRNA to form the base of the stalk. The C-terminus forms an elongated spine to which L12 dimers bind in a sequential fashion forming a multimeric L10(L12)X complex.</text>
</comment>
<comment type="similarity">
    <text evidence="1">Belongs to the universal ribosomal protein uL10 family.</text>
</comment>
<accession>A6X0A7</accession>
<organism>
    <name type="scientific">Brucella anthropi (strain ATCC 49188 / DSM 6882 / CCUG 24695 / JCM 21032 / LMG 3331 / NBRC 15819 / NCTC 12168 / Alc 37)</name>
    <name type="common">Ochrobactrum anthropi</name>
    <dbReference type="NCBI Taxonomy" id="439375"/>
    <lineage>
        <taxon>Bacteria</taxon>
        <taxon>Pseudomonadati</taxon>
        <taxon>Pseudomonadota</taxon>
        <taxon>Alphaproteobacteria</taxon>
        <taxon>Hyphomicrobiales</taxon>
        <taxon>Brucellaceae</taxon>
        <taxon>Brucella/Ochrobactrum group</taxon>
        <taxon>Brucella</taxon>
    </lineage>
</organism>